<organism>
    <name type="scientific">Dictyostelium citrinum</name>
    <name type="common">Slime mold</name>
    <dbReference type="NCBI Taxonomy" id="361072"/>
    <lineage>
        <taxon>Eukaryota</taxon>
        <taxon>Amoebozoa</taxon>
        <taxon>Evosea</taxon>
        <taxon>Eumycetozoa</taxon>
        <taxon>Dictyostelia</taxon>
        <taxon>Dictyosteliales</taxon>
        <taxon>Dictyosteliaceae</taxon>
        <taxon>Dictyostelium</taxon>
    </lineage>
</organism>
<sequence length="120" mass="14029">MLVTVEFTYILILFFISLGLSIILFFLGYFLMFKVAYEDKLMGYECGFDPFGNARGEFDIRFYLVAILFLIFDLEITFLFPFSVSIMSMTLFSYSIMLIFLIILTIGFIYEIKKGALDWS</sequence>
<proteinExistence type="inferred from homology"/>
<protein>
    <recommendedName>
        <fullName>NADH-ubiquinone oxidoreductase chain 3</fullName>
        <ecNumber>7.1.1.2</ecNumber>
    </recommendedName>
    <alternativeName>
        <fullName>NADH dehydrogenase subunit 3</fullName>
    </alternativeName>
</protein>
<gene>
    <name type="primary">nad3</name>
</gene>
<dbReference type="EC" id="7.1.1.2"/>
<dbReference type="EMBL" id="DQ336395">
    <property type="protein sequence ID" value="ABC60383.1"/>
    <property type="molecule type" value="Genomic_DNA"/>
</dbReference>
<dbReference type="RefSeq" id="YP_492632.1">
    <property type="nucleotide sequence ID" value="NC_007787.2"/>
</dbReference>
<dbReference type="SMR" id="Q2LCR0"/>
<dbReference type="GeneID" id="3912641"/>
<dbReference type="GO" id="GO:0031966">
    <property type="term" value="C:mitochondrial membrane"/>
    <property type="evidence" value="ECO:0007669"/>
    <property type="project" value="UniProtKB-SubCell"/>
</dbReference>
<dbReference type="GO" id="GO:0030964">
    <property type="term" value="C:NADH dehydrogenase complex"/>
    <property type="evidence" value="ECO:0007669"/>
    <property type="project" value="TreeGrafter"/>
</dbReference>
<dbReference type="GO" id="GO:0008137">
    <property type="term" value="F:NADH dehydrogenase (ubiquinone) activity"/>
    <property type="evidence" value="ECO:0007669"/>
    <property type="project" value="UniProtKB-EC"/>
</dbReference>
<dbReference type="FunFam" id="1.20.58.1610:FF:000004">
    <property type="entry name" value="NADH-quinone oxidoreductase subunit A"/>
    <property type="match status" value="1"/>
</dbReference>
<dbReference type="Gene3D" id="1.20.58.1610">
    <property type="entry name" value="NADH:ubiquinone/plastoquinone oxidoreductase, chain 3"/>
    <property type="match status" value="1"/>
</dbReference>
<dbReference type="HAMAP" id="MF_01394">
    <property type="entry name" value="NDH1_NuoA"/>
    <property type="match status" value="1"/>
</dbReference>
<dbReference type="InterPro" id="IPR023043">
    <property type="entry name" value="NAD(P)H_OxRDtase_bac/plastid"/>
</dbReference>
<dbReference type="InterPro" id="IPR000440">
    <property type="entry name" value="NADH_UbQ/plastoQ_OxRdtase_su3"/>
</dbReference>
<dbReference type="InterPro" id="IPR038430">
    <property type="entry name" value="NDAH_ubi_oxred_su3_sf"/>
</dbReference>
<dbReference type="PANTHER" id="PTHR11058">
    <property type="entry name" value="NADH-UBIQUINONE OXIDOREDUCTASE CHAIN 3"/>
    <property type="match status" value="1"/>
</dbReference>
<dbReference type="PANTHER" id="PTHR11058:SF9">
    <property type="entry name" value="NADH-UBIQUINONE OXIDOREDUCTASE CHAIN 3"/>
    <property type="match status" value="1"/>
</dbReference>
<dbReference type="Pfam" id="PF00507">
    <property type="entry name" value="Oxidored_q4"/>
    <property type="match status" value="1"/>
</dbReference>
<evidence type="ECO:0000250" key="1"/>
<evidence type="ECO:0000255" key="2"/>
<evidence type="ECO:0000305" key="3"/>
<feature type="chain" id="PRO_0000312392" description="NADH-ubiquinone oxidoreductase chain 3">
    <location>
        <begin position="1"/>
        <end position="120"/>
    </location>
</feature>
<feature type="transmembrane region" description="Helical" evidence="2">
    <location>
        <begin position="10"/>
        <end position="30"/>
    </location>
</feature>
<feature type="transmembrane region" description="Helical" evidence="2">
    <location>
        <begin position="62"/>
        <end position="82"/>
    </location>
</feature>
<feature type="transmembrane region" description="Helical" evidence="2">
    <location>
        <begin position="89"/>
        <end position="109"/>
    </location>
</feature>
<keyword id="KW-0249">Electron transport</keyword>
<keyword id="KW-0472">Membrane</keyword>
<keyword id="KW-0496">Mitochondrion</keyword>
<keyword id="KW-0520">NAD</keyword>
<keyword id="KW-0679">Respiratory chain</keyword>
<keyword id="KW-1278">Translocase</keyword>
<keyword id="KW-0812">Transmembrane</keyword>
<keyword id="KW-1133">Transmembrane helix</keyword>
<keyword id="KW-0813">Transport</keyword>
<keyword id="KW-0830">Ubiquinone</keyword>
<comment type="function">
    <text evidence="1">Core subunit of the mitochondrial membrane respiratory chain NADH dehydrogenase (Complex I) that is believed to belong to the minimal assembly required for catalysis. Complex I functions in the transfer of electrons from NADH to the respiratory chain. The immediate electron acceptor for the enzyme is believed to be ubiquinone (By similarity).</text>
</comment>
<comment type="catalytic activity">
    <reaction>
        <text>a ubiquinone + NADH + 5 H(+)(in) = a ubiquinol + NAD(+) + 4 H(+)(out)</text>
        <dbReference type="Rhea" id="RHEA:29091"/>
        <dbReference type="Rhea" id="RHEA-COMP:9565"/>
        <dbReference type="Rhea" id="RHEA-COMP:9566"/>
        <dbReference type="ChEBI" id="CHEBI:15378"/>
        <dbReference type="ChEBI" id="CHEBI:16389"/>
        <dbReference type="ChEBI" id="CHEBI:17976"/>
        <dbReference type="ChEBI" id="CHEBI:57540"/>
        <dbReference type="ChEBI" id="CHEBI:57945"/>
        <dbReference type="EC" id="7.1.1.2"/>
    </reaction>
</comment>
<comment type="subcellular location">
    <subcellularLocation>
        <location evidence="1">Mitochondrion membrane</location>
        <topology evidence="1">Multi-pass membrane protein</topology>
    </subcellularLocation>
</comment>
<comment type="similarity">
    <text evidence="3">Belongs to the complex I subunit 3 family.</text>
</comment>
<name>NU3M_DICCI</name>
<geneLocation type="mitochondrion"/>
<accession>Q2LCR0</accession>
<reference key="1">
    <citation type="journal article" date="2008" name="Mol. Biol. Evol.">
        <title>Mitochondrial genome evolution in the social amoebae.</title>
        <authorList>
            <person name="Heidel A.J."/>
            <person name="Gloeckner G."/>
        </authorList>
    </citation>
    <scope>NUCLEOTIDE SEQUENCE [LARGE SCALE GENOMIC DNA]</scope>
</reference>